<name>DHAL1_LISIN</name>
<evidence type="ECO:0000250" key="1">
    <source>
        <dbReference type="UniProtKB" id="P76014"/>
    </source>
</evidence>
<evidence type="ECO:0000250" key="2">
    <source>
        <dbReference type="UniProtKB" id="Q92EU3"/>
    </source>
</evidence>
<evidence type="ECO:0000250" key="3">
    <source>
        <dbReference type="UniProtKB" id="Q9CIV7"/>
    </source>
</evidence>
<evidence type="ECO:0000255" key="4">
    <source>
        <dbReference type="PROSITE-ProRule" id="PRU00813"/>
    </source>
</evidence>
<evidence type="ECO:0000303" key="5">
    <source>
    </source>
</evidence>
<evidence type="ECO:0000305" key="6"/>
<evidence type="ECO:0000312" key="7">
    <source>
        <dbReference type="EMBL" id="CAC98070.1"/>
    </source>
</evidence>
<dbReference type="EC" id="2.7.1.121" evidence="2"/>
<dbReference type="EMBL" id="AL596173">
    <property type="protein sequence ID" value="CAC98070.1"/>
    <property type="molecule type" value="Genomic_DNA"/>
</dbReference>
<dbReference type="PIR" id="AF1787">
    <property type="entry name" value="AF1787"/>
</dbReference>
<dbReference type="RefSeq" id="WP_010991404.1">
    <property type="nucleotide sequence ID" value="NC_003212.1"/>
</dbReference>
<dbReference type="SMR" id="Q927E5"/>
<dbReference type="STRING" id="272626.gene:17567231"/>
<dbReference type="GeneID" id="93236118"/>
<dbReference type="KEGG" id="lin:lin2844"/>
<dbReference type="eggNOG" id="COG1461">
    <property type="taxonomic scope" value="Bacteria"/>
</dbReference>
<dbReference type="HOGENOM" id="CLU_066424_5_0_9"/>
<dbReference type="OrthoDB" id="9800291at2"/>
<dbReference type="UniPathway" id="UPA00616"/>
<dbReference type="Proteomes" id="UP000002513">
    <property type="component" value="Chromosome"/>
</dbReference>
<dbReference type="GO" id="GO:0005829">
    <property type="term" value="C:cytosol"/>
    <property type="evidence" value="ECO:0007669"/>
    <property type="project" value="TreeGrafter"/>
</dbReference>
<dbReference type="GO" id="GO:0005524">
    <property type="term" value="F:ATP binding"/>
    <property type="evidence" value="ECO:0000250"/>
    <property type="project" value="UniProtKB"/>
</dbReference>
<dbReference type="GO" id="GO:0004371">
    <property type="term" value="F:glycerone kinase activity"/>
    <property type="evidence" value="ECO:0007669"/>
    <property type="project" value="InterPro"/>
</dbReference>
<dbReference type="GO" id="GO:0000287">
    <property type="term" value="F:magnesium ion binding"/>
    <property type="evidence" value="ECO:0000250"/>
    <property type="project" value="UniProtKB"/>
</dbReference>
<dbReference type="GO" id="GO:0047324">
    <property type="term" value="F:phosphoenolpyruvate-glycerone phosphotransferase activity"/>
    <property type="evidence" value="ECO:0000250"/>
    <property type="project" value="UniProtKB"/>
</dbReference>
<dbReference type="GO" id="GO:0019563">
    <property type="term" value="P:glycerol catabolic process"/>
    <property type="evidence" value="ECO:0007669"/>
    <property type="project" value="UniProtKB-UniPathway"/>
</dbReference>
<dbReference type="FunFam" id="1.25.40.340:FF:000002">
    <property type="entry name" value="Dihydroxyacetone kinase, L subunit"/>
    <property type="match status" value="1"/>
</dbReference>
<dbReference type="Gene3D" id="1.25.40.340">
    <property type="match status" value="1"/>
</dbReference>
<dbReference type="InterPro" id="IPR012737">
    <property type="entry name" value="DhaK_L_YcgS"/>
</dbReference>
<dbReference type="InterPro" id="IPR004007">
    <property type="entry name" value="DhaL_dom"/>
</dbReference>
<dbReference type="InterPro" id="IPR036117">
    <property type="entry name" value="DhaL_dom_sf"/>
</dbReference>
<dbReference type="InterPro" id="IPR050861">
    <property type="entry name" value="Dihydroxyacetone_Kinase"/>
</dbReference>
<dbReference type="NCBIfam" id="TIGR02365">
    <property type="entry name" value="dha_L_ycgS"/>
    <property type="match status" value="1"/>
</dbReference>
<dbReference type="PANTHER" id="PTHR28629">
    <property type="entry name" value="TRIOKINASE/FMN CYCLASE"/>
    <property type="match status" value="1"/>
</dbReference>
<dbReference type="PANTHER" id="PTHR28629:SF4">
    <property type="entry name" value="TRIOKINASE_FMN CYCLASE"/>
    <property type="match status" value="1"/>
</dbReference>
<dbReference type="Pfam" id="PF02734">
    <property type="entry name" value="Dak2"/>
    <property type="match status" value="1"/>
</dbReference>
<dbReference type="SMART" id="SM01120">
    <property type="entry name" value="Dak2"/>
    <property type="match status" value="1"/>
</dbReference>
<dbReference type="SUPFAM" id="SSF101473">
    <property type="entry name" value="DhaL-like"/>
    <property type="match status" value="1"/>
</dbReference>
<dbReference type="PROSITE" id="PS51480">
    <property type="entry name" value="DHAL"/>
    <property type="match status" value="1"/>
</dbReference>
<gene>
    <name evidence="5" type="primary">dhaL-1</name>
    <name evidence="7" type="ordered locus">lin2844</name>
</gene>
<feature type="chain" id="PRO_0000439400" description="PEP-dependent dihydroxyacetone kinase 1, ADP-binding subunit DhaL">
    <location>
        <begin position="1"/>
        <end position="198"/>
    </location>
</feature>
<feature type="domain" description="DhaL" evidence="4">
    <location>
        <begin position="6"/>
        <end position="194"/>
    </location>
</feature>
<feature type="binding site" evidence="3">
    <location>
        <position position="30"/>
    </location>
    <ligand>
        <name>Mg(2+)</name>
        <dbReference type="ChEBI" id="CHEBI:18420"/>
    </ligand>
</feature>
<feature type="binding site" evidence="3">
    <location>
        <position position="35"/>
    </location>
    <ligand>
        <name>Mg(2+)</name>
        <dbReference type="ChEBI" id="CHEBI:18420"/>
    </ligand>
</feature>
<feature type="binding site" evidence="3">
    <location>
        <position position="37"/>
    </location>
    <ligand>
        <name>Mg(2+)</name>
        <dbReference type="ChEBI" id="CHEBI:18420"/>
    </ligand>
</feature>
<feature type="binding site" evidence="3">
    <location>
        <begin position="38"/>
        <end position="41"/>
    </location>
    <ligand>
        <name>ADP</name>
        <dbReference type="ChEBI" id="CHEBI:456216"/>
    </ligand>
</feature>
<feature type="binding site" evidence="3">
    <location>
        <begin position="79"/>
        <end position="80"/>
    </location>
    <ligand>
        <name>ADP</name>
        <dbReference type="ChEBI" id="CHEBI:456216"/>
    </ligand>
</feature>
<feature type="binding site" evidence="3">
    <location>
        <position position="120"/>
    </location>
    <ligand>
        <name>ADP</name>
        <dbReference type="ChEBI" id="CHEBI:456216"/>
    </ligand>
</feature>
<feature type="binding site" evidence="1">
    <location>
        <position position="129"/>
    </location>
    <ligand>
        <name>ADP</name>
        <dbReference type="ChEBI" id="CHEBI:456216"/>
    </ligand>
</feature>
<feature type="binding site" evidence="3">
    <location>
        <position position="166"/>
    </location>
    <ligand>
        <name>ADP</name>
        <dbReference type="ChEBI" id="CHEBI:456216"/>
    </ligand>
</feature>
<feature type="binding site" evidence="3">
    <location>
        <begin position="179"/>
        <end position="181"/>
    </location>
    <ligand>
        <name>ADP</name>
        <dbReference type="ChEBI" id="CHEBI:456216"/>
    </ligand>
</feature>
<keyword id="KW-0067">ATP-binding</keyword>
<keyword id="KW-0963">Cytoplasm</keyword>
<keyword id="KW-0319">Glycerol metabolism</keyword>
<keyword id="KW-0418">Kinase</keyword>
<keyword id="KW-0460">Magnesium</keyword>
<keyword id="KW-0479">Metal-binding</keyword>
<keyword id="KW-0547">Nucleotide-binding</keyword>
<keyword id="KW-0808">Transferase</keyword>
<sequence length="198" mass="21530">MTYDKDWALRWLNDFGERVQENKQLLSDLDQAIGDGDHGINMARGLSELKKAFTEKEPADLTDVFKTAGMTMVSKVGGASGPLYGTAFLNMSKAVDSETIDAEGLTKVIEAGLEGIEKRGKSHAGEKTMIDVWEPVVNALHQEDLTDDVVEAALQKTKDLKATKGRASYLGERSIGHLDPGAYSSALLFHAMLQTEVS</sequence>
<accession>Q927E5</accession>
<organism>
    <name type="scientific">Listeria innocua serovar 6a (strain ATCC BAA-680 / CLIP 11262)</name>
    <dbReference type="NCBI Taxonomy" id="272626"/>
    <lineage>
        <taxon>Bacteria</taxon>
        <taxon>Bacillati</taxon>
        <taxon>Bacillota</taxon>
        <taxon>Bacilli</taxon>
        <taxon>Bacillales</taxon>
        <taxon>Listeriaceae</taxon>
        <taxon>Listeria</taxon>
    </lineage>
</organism>
<proteinExistence type="inferred from homology"/>
<protein>
    <recommendedName>
        <fullName evidence="5">PEP-dependent dihydroxyacetone kinase 1, ADP-binding subunit DhaL</fullName>
        <ecNumber evidence="2">2.7.1.121</ecNumber>
    </recommendedName>
</protein>
<comment type="function">
    <text evidence="2">ADP-binding subunit of the dihydroxyacetone kinase, which is responsible for the phosphoenolpyruvate (PEP)-dependent phosphorylation of dihydroxyacetone. DhaL-ADP is converted to DhaL-ATP via a phosphoryl group transfer from DhaM and transmits it to dihydroxyacetone binds to DhaK.</text>
</comment>
<comment type="catalytic activity">
    <reaction evidence="2">
        <text>dihydroxyacetone + phosphoenolpyruvate = dihydroxyacetone phosphate + pyruvate</text>
        <dbReference type="Rhea" id="RHEA:18381"/>
        <dbReference type="ChEBI" id="CHEBI:15361"/>
        <dbReference type="ChEBI" id="CHEBI:16016"/>
        <dbReference type="ChEBI" id="CHEBI:57642"/>
        <dbReference type="ChEBI" id="CHEBI:58702"/>
        <dbReference type="EC" id="2.7.1.121"/>
    </reaction>
</comment>
<comment type="cofactor">
    <cofactor evidence="3">
        <name>Mg(2+)</name>
        <dbReference type="ChEBI" id="CHEBI:18420"/>
    </cofactor>
</comment>
<comment type="pathway">
    <text evidence="6">Polyol metabolism; glycerol degradation.</text>
</comment>
<comment type="subunit">
    <text evidence="3">Homodimer. The dihydroxyacetone kinase complex is composed of a homodimer of DhaM, a homodimer of DhaK and the subunit DhaL.</text>
</comment>
<comment type="subcellular location">
    <subcellularLocation>
        <location evidence="2">Cytoplasm</location>
    </subcellularLocation>
</comment>
<comment type="miscellaneous">
    <text evidence="2">Unlike the carbohydrate-specific transporters of the PTS, the complex DhaKML has no transport activity.</text>
</comment>
<reference key="1">
    <citation type="journal article" date="2001" name="Science">
        <title>Comparative genomics of Listeria species.</title>
        <authorList>
            <person name="Glaser P."/>
            <person name="Frangeul L."/>
            <person name="Buchrieser C."/>
            <person name="Rusniok C."/>
            <person name="Amend A."/>
            <person name="Baquero F."/>
            <person name="Berche P."/>
            <person name="Bloecker H."/>
            <person name="Brandt P."/>
            <person name="Chakraborty T."/>
            <person name="Charbit A."/>
            <person name="Chetouani F."/>
            <person name="Couve E."/>
            <person name="de Daruvar A."/>
            <person name="Dehoux P."/>
            <person name="Domann E."/>
            <person name="Dominguez-Bernal G."/>
            <person name="Duchaud E."/>
            <person name="Durant L."/>
            <person name="Dussurget O."/>
            <person name="Entian K.-D."/>
            <person name="Fsihi H."/>
            <person name="Garcia-del Portillo F."/>
            <person name="Garrido P."/>
            <person name="Gautier L."/>
            <person name="Goebel W."/>
            <person name="Gomez-Lopez N."/>
            <person name="Hain T."/>
            <person name="Hauf J."/>
            <person name="Jackson D."/>
            <person name="Jones L.-M."/>
            <person name="Kaerst U."/>
            <person name="Kreft J."/>
            <person name="Kuhn M."/>
            <person name="Kunst F."/>
            <person name="Kurapkat G."/>
            <person name="Madueno E."/>
            <person name="Maitournam A."/>
            <person name="Mata Vicente J."/>
            <person name="Ng E."/>
            <person name="Nedjari H."/>
            <person name="Nordsiek G."/>
            <person name="Novella S."/>
            <person name="de Pablos B."/>
            <person name="Perez-Diaz J.-C."/>
            <person name="Purcell R."/>
            <person name="Remmel B."/>
            <person name="Rose M."/>
            <person name="Schlueter T."/>
            <person name="Simoes N."/>
            <person name="Tierrez A."/>
            <person name="Vazquez-Boland J.-A."/>
            <person name="Voss H."/>
            <person name="Wehland J."/>
            <person name="Cossart P."/>
        </authorList>
    </citation>
    <scope>NUCLEOTIDE SEQUENCE [LARGE SCALE GENOMIC DNA]</scope>
    <source>
        <strain>ATCC BAA-680 / CLIP 11262</strain>
    </source>
</reference>
<reference key="2">
    <citation type="journal article" date="2012" name="J. Bacteriol.">
        <title>Novel listerial glycerol dehydrogenase- and phosphoenolpyruvate-dependent dihydroxyacetone kinase system connected to the pentose phosphate pathway.</title>
        <authorList>
            <person name="Monniot C."/>
            <person name="Zebre A.C."/>
            <person name="Ake F.M."/>
            <person name="Deutscher J."/>
            <person name="Milohanic E."/>
        </authorList>
    </citation>
    <scope>NOMENCLATURE</scope>
</reference>